<proteinExistence type="inferred from homology"/>
<comment type="function">
    <text evidence="1">Catalyzes the GTP-dependent ribosomal translocation step during translation elongation. During this step, the ribosome changes from the pre-translocational (PRE) to the post-translocational (POST) state as the newly formed A-site-bound peptidyl-tRNA and P-site-bound deacylated tRNA move to the P and E sites, respectively. Catalyzes the coordinated movement of the two tRNA molecules, the mRNA and conformational changes in the ribosome.</text>
</comment>
<comment type="subcellular location">
    <subcellularLocation>
        <location evidence="1">Cytoplasm</location>
    </subcellularLocation>
</comment>
<comment type="similarity">
    <text evidence="1">Belongs to the TRAFAC class translation factor GTPase superfamily. Classic translation factor GTPase family. EF-G/EF-2 subfamily.</text>
</comment>
<evidence type="ECO:0000255" key="1">
    <source>
        <dbReference type="HAMAP-Rule" id="MF_00054"/>
    </source>
</evidence>
<feature type="chain" id="PRO_0000263517" description="Elongation factor G">
    <location>
        <begin position="1"/>
        <end position="692"/>
    </location>
</feature>
<feature type="domain" description="tr-type G">
    <location>
        <begin position="8"/>
        <end position="282"/>
    </location>
</feature>
<feature type="binding site" evidence="1">
    <location>
        <begin position="17"/>
        <end position="24"/>
    </location>
    <ligand>
        <name>GTP</name>
        <dbReference type="ChEBI" id="CHEBI:37565"/>
    </ligand>
</feature>
<feature type="binding site" evidence="1">
    <location>
        <begin position="81"/>
        <end position="85"/>
    </location>
    <ligand>
        <name>GTP</name>
        <dbReference type="ChEBI" id="CHEBI:37565"/>
    </ligand>
</feature>
<feature type="binding site" evidence="1">
    <location>
        <begin position="135"/>
        <end position="138"/>
    </location>
    <ligand>
        <name>GTP</name>
        <dbReference type="ChEBI" id="CHEBI:37565"/>
    </ligand>
</feature>
<keyword id="KW-0963">Cytoplasm</keyword>
<keyword id="KW-0251">Elongation factor</keyword>
<keyword id="KW-0342">GTP-binding</keyword>
<keyword id="KW-0547">Nucleotide-binding</keyword>
<keyword id="KW-0648">Protein biosynthesis</keyword>
<sequence>MAREFSLAKTRNIGIMAHVDAGKTTTTERILYYTGKIHKIGETHEGASQMDWMEQEQERGITITSAATTAQWDGHRVNIIDTPGHVDFTIEVQRSLRVLDGAVTVLDSQSGVEPQTETVWRQATEYGVPRIVFANKMDKIGADFLYSVQTLHDRLQANAHPIQLPIGAEDDFRGIIDLIKMKAEIYTNDLGTDILEEDIPEEYLEQAQEYREKLIEAVAETDEDLMMKYLEGEEITNDELIAGIRKATINVEFFPVLCGSAFKNKGVQLMLDAVIAYLPSPLDIPAIKGVNPDTDAEEERPASDEEPFAALAFKIMTDPFVGRLTFFRVYSGVLNSGSYVMNTSKGKRERIGRILQMHANSRQEIETVYAGDIAAAVGLKDTTTGDSLTDEKAKVILESIEVPEPVIQLMVEPKSKADQDKMGVALQKLAEEDPTFRVETNVETGETVIAGMGELHLDVLVDRMKREFKVEANVGAPQVSYRETFRASTQARGFFKRQSGGKGQFGDVWIEFTPNEEGKGFEFENAIVGGVVPREFIPAVEKGLIESMANGVLAGYPMVDVKAKLYDGSYHDVDSSETAFKIAASLALKEAAKSAQPAILEPMMLVTITAPEDNLGDVMGHVTARRGRVDGMEAHGNSQIVRAYVPLAEMFGYATVLRSATQGRGTFMMVFDHYEDVPKSVQEEIIKKNKGE</sequence>
<dbReference type="EMBL" id="CP000259">
    <property type="protein sequence ID" value="ABF31422.1"/>
    <property type="molecule type" value="Genomic_DNA"/>
</dbReference>
<dbReference type="RefSeq" id="WP_002986045.1">
    <property type="nucleotide sequence ID" value="NC_008021.1"/>
</dbReference>
<dbReference type="SMR" id="Q1JNH7"/>
<dbReference type="GeneID" id="69900199"/>
<dbReference type="KEGG" id="spk:MGAS9429_Spy0234"/>
<dbReference type="HOGENOM" id="CLU_002794_4_1_9"/>
<dbReference type="Proteomes" id="UP000002433">
    <property type="component" value="Chromosome"/>
</dbReference>
<dbReference type="GO" id="GO:0005737">
    <property type="term" value="C:cytoplasm"/>
    <property type="evidence" value="ECO:0007669"/>
    <property type="project" value="UniProtKB-SubCell"/>
</dbReference>
<dbReference type="GO" id="GO:0005525">
    <property type="term" value="F:GTP binding"/>
    <property type="evidence" value="ECO:0007669"/>
    <property type="project" value="UniProtKB-UniRule"/>
</dbReference>
<dbReference type="GO" id="GO:0003924">
    <property type="term" value="F:GTPase activity"/>
    <property type="evidence" value="ECO:0007669"/>
    <property type="project" value="InterPro"/>
</dbReference>
<dbReference type="GO" id="GO:0003746">
    <property type="term" value="F:translation elongation factor activity"/>
    <property type="evidence" value="ECO:0007669"/>
    <property type="project" value="UniProtKB-UniRule"/>
</dbReference>
<dbReference type="GO" id="GO:0032790">
    <property type="term" value="P:ribosome disassembly"/>
    <property type="evidence" value="ECO:0007669"/>
    <property type="project" value="TreeGrafter"/>
</dbReference>
<dbReference type="CDD" id="cd01886">
    <property type="entry name" value="EF-G"/>
    <property type="match status" value="1"/>
</dbReference>
<dbReference type="CDD" id="cd16262">
    <property type="entry name" value="EFG_III"/>
    <property type="match status" value="1"/>
</dbReference>
<dbReference type="CDD" id="cd01434">
    <property type="entry name" value="EFG_mtEFG1_IV"/>
    <property type="match status" value="1"/>
</dbReference>
<dbReference type="CDD" id="cd03713">
    <property type="entry name" value="EFG_mtEFG_C"/>
    <property type="match status" value="1"/>
</dbReference>
<dbReference type="CDD" id="cd04088">
    <property type="entry name" value="EFG_mtEFG_II"/>
    <property type="match status" value="1"/>
</dbReference>
<dbReference type="FunFam" id="2.40.30.10:FF:000006">
    <property type="entry name" value="Elongation factor G"/>
    <property type="match status" value="1"/>
</dbReference>
<dbReference type="FunFam" id="3.30.230.10:FF:000003">
    <property type="entry name" value="Elongation factor G"/>
    <property type="match status" value="1"/>
</dbReference>
<dbReference type="FunFam" id="3.30.70.240:FF:000001">
    <property type="entry name" value="Elongation factor G"/>
    <property type="match status" value="1"/>
</dbReference>
<dbReference type="FunFam" id="3.30.70.870:FF:000001">
    <property type="entry name" value="Elongation factor G"/>
    <property type="match status" value="1"/>
</dbReference>
<dbReference type="FunFam" id="3.40.50.300:FF:000029">
    <property type="entry name" value="Elongation factor G"/>
    <property type="match status" value="1"/>
</dbReference>
<dbReference type="Gene3D" id="3.30.230.10">
    <property type="match status" value="1"/>
</dbReference>
<dbReference type="Gene3D" id="3.30.70.240">
    <property type="match status" value="1"/>
</dbReference>
<dbReference type="Gene3D" id="3.30.70.870">
    <property type="entry name" value="Elongation Factor G (Translational Gtpase), domain 3"/>
    <property type="match status" value="1"/>
</dbReference>
<dbReference type="Gene3D" id="3.40.50.300">
    <property type="entry name" value="P-loop containing nucleotide triphosphate hydrolases"/>
    <property type="match status" value="1"/>
</dbReference>
<dbReference type="Gene3D" id="2.40.30.10">
    <property type="entry name" value="Translation factors"/>
    <property type="match status" value="1"/>
</dbReference>
<dbReference type="HAMAP" id="MF_00054_B">
    <property type="entry name" value="EF_G_EF_2_B"/>
    <property type="match status" value="1"/>
</dbReference>
<dbReference type="InterPro" id="IPR041095">
    <property type="entry name" value="EFG_II"/>
</dbReference>
<dbReference type="InterPro" id="IPR009022">
    <property type="entry name" value="EFG_III"/>
</dbReference>
<dbReference type="InterPro" id="IPR035647">
    <property type="entry name" value="EFG_III/V"/>
</dbReference>
<dbReference type="InterPro" id="IPR047872">
    <property type="entry name" value="EFG_IV"/>
</dbReference>
<dbReference type="InterPro" id="IPR035649">
    <property type="entry name" value="EFG_V"/>
</dbReference>
<dbReference type="InterPro" id="IPR000640">
    <property type="entry name" value="EFG_V-like"/>
</dbReference>
<dbReference type="InterPro" id="IPR004161">
    <property type="entry name" value="EFTu-like_2"/>
</dbReference>
<dbReference type="InterPro" id="IPR031157">
    <property type="entry name" value="G_TR_CS"/>
</dbReference>
<dbReference type="InterPro" id="IPR027417">
    <property type="entry name" value="P-loop_NTPase"/>
</dbReference>
<dbReference type="InterPro" id="IPR020568">
    <property type="entry name" value="Ribosomal_Su5_D2-typ_SF"/>
</dbReference>
<dbReference type="InterPro" id="IPR014721">
    <property type="entry name" value="Ribsml_uS5_D2-typ_fold_subgr"/>
</dbReference>
<dbReference type="InterPro" id="IPR005225">
    <property type="entry name" value="Small_GTP-bd"/>
</dbReference>
<dbReference type="InterPro" id="IPR000795">
    <property type="entry name" value="T_Tr_GTP-bd_dom"/>
</dbReference>
<dbReference type="InterPro" id="IPR009000">
    <property type="entry name" value="Transl_B-barrel_sf"/>
</dbReference>
<dbReference type="InterPro" id="IPR004540">
    <property type="entry name" value="Transl_elong_EFG/EF2"/>
</dbReference>
<dbReference type="InterPro" id="IPR005517">
    <property type="entry name" value="Transl_elong_EFG/EF2_IV"/>
</dbReference>
<dbReference type="NCBIfam" id="TIGR00484">
    <property type="entry name" value="EF-G"/>
    <property type="match status" value="1"/>
</dbReference>
<dbReference type="NCBIfam" id="NF009379">
    <property type="entry name" value="PRK12740.1-3"/>
    <property type="match status" value="1"/>
</dbReference>
<dbReference type="NCBIfam" id="NF009381">
    <property type="entry name" value="PRK12740.1-5"/>
    <property type="match status" value="1"/>
</dbReference>
<dbReference type="NCBIfam" id="TIGR00231">
    <property type="entry name" value="small_GTP"/>
    <property type="match status" value="1"/>
</dbReference>
<dbReference type="PANTHER" id="PTHR43261:SF1">
    <property type="entry name" value="RIBOSOME-RELEASING FACTOR 2, MITOCHONDRIAL"/>
    <property type="match status" value="1"/>
</dbReference>
<dbReference type="PANTHER" id="PTHR43261">
    <property type="entry name" value="TRANSLATION ELONGATION FACTOR G-RELATED"/>
    <property type="match status" value="1"/>
</dbReference>
<dbReference type="Pfam" id="PF00679">
    <property type="entry name" value="EFG_C"/>
    <property type="match status" value="1"/>
</dbReference>
<dbReference type="Pfam" id="PF14492">
    <property type="entry name" value="EFG_III"/>
    <property type="match status" value="1"/>
</dbReference>
<dbReference type="Pfam" id="PF03764">
    <property type="entry name" value="EFG_IV"/>
    <property type="match status" value="1"/>
</dbReference>
<dbReference type="Pfam" id="PF00009">
    <property type="entry name" value="GTP_EFTU"/>
    <property type="match status" value="1"/>
</dbReference>
<dbReference type="Pfam" id="PF03144">
    <property type="entry name" value="GTP_EFTU_D2"/>
    <property type="match status" value="1"/>
</dbReference>
<dbReference type="PRINTS" id="PR00315">
    <property type="entry name" value="ELONGATNFCT"/>
</dbReference>
<dbReference type="SMART" id="SM00838">
    <property type="entry name" value="EFG_C"/>
    <property type="match status" value="1"/>
</dbReference>
<dbReference type="SMART" id="SM00889">
    <property type="entry name" value="EFG_IV"/>
    <property type="match status" value="1"/>
</dbReference>
<dbReference type="SUPFAM" id="SSF54980">
    <property type="entry name" value="EF-G C-terminal domain-like"/>
    <property type="match status" value="2"/>
</dbReference>
<dbReference type="SUPFAM" id="SSF52540">
    <property type="entry name" value="P-loop containing nucleoside triphosphate hydrolases"/>
    <property type="match status" value="1"/>
</dbReference>
<dbReference type="SUPFAM" id="SSF54211">
    <property type="entry name" value="Ribosomal protein S5 domain 2-like"/>
    <property type="match status" value="1"/>
</dbReference>
<dbReference type="SUPFAM" id="SSF50447">
    <property type="entry name" value="Translation proteins"/>
    <property type="match status" value="1"/>
</dbReference>
<dbReference type="PROSITE" id="PS00301">
    <property type="entry name" value="G_TR_1"/>
    <property type="match status" value="1"/>
</dbReference>
<dbReference type="PROSITE" id="PS51722">
    <property type="entry name" value="G_TR_2"/>
    <property type="match status" value="1"/>
</dbReference>
<gene>
    <name evidence="1" type="primary">fusA</name>
    <name type="ordered locus">MGAS9429_Spy0234</name>
</gene>
<reference key="1">
    <citation type="journal article" date="2006" name="Proc. Natl. Acad. Sci. U.S.A.">
        <title>Molecular genetic anatomy of inter- and intraserotype variation in the human bacterial pathogen group A Streptococcus.</title>
        <authorList>
            <person name="Beres S.B."/>
            <person name="Richter E.W."/>
            <person name="Nagiec M.J."/>
            <person name="Sumby P."/>
            <person name="Porcella S.F."/>
            <person name="DeLeo F.R."/>
            <person name="Musser J.M."/>
        </authorList>
    </citation>
    <scope>NUCLEOTIDE SEQUENCE [LARGE SCALE GENOMIC DNA]</scope>
    <source>
        <strain>MGAS9429</strain>
    </source>
</reference>
<protein>
    <recommendedName>
        <fullName evidence="1">Elongation factor G</fullName>
        <shortName evidence="1">EF-G</shortName>
    </recommendedName>
</protein>
<accession>Q1JNH7</accession>
<organism>
    <name type="scientific">Streptococcus pyogenes serotype M12 (strain MGAS9429)</name>
    <dbReference type="NCBI Taxonomy" id="370551"/>
    <lineage>
        <taxon>Bacteria</taxon>
        <taxon>Bacillati</taxon>
        <taxon>Bacillota</taxon>
        <taxon>Bacilli</taxon>
        <taxon>Lactobacillales</taxon>
        <taxon>Streptococcaceae</taxon>
        <taxon>Streptococcus</taxon>
    </lineage>
</organism>
<name>EFG_STRPC</name>